<protein>
    <recommendedName>
        <fullName>Cytidine monophosphate-N-acetylneuraminic acid hydroxylase</fullName>
        <shortName>CMP-N-acetylneuraminic acid hydroxylase</shortName>
        <ecNumber>1.14.18.2</ecNumber>
    </recommendedName>
    <alternativeName>
        <fullName>CMP-N-acetylneuraminate monooxygenase</fullName>
    </alternativeName>
    <alternativeName>
        <fullName>CMP-Neu5Ac hydroxylase</fullName>
    </alternativeName>
    <alternativeName>
        <fullName>CMP-NeuAc hydroxylase</fullName>
    </alternativeName>
</protein>
<accession>O19074</accession>
<keyword id="KW-0001">2Fe-2S</keyword>
<keyword id="KW-0963">Cytoplasm</keyword>
<keyword id="KW-0249">Electron transport</keyword>
<keyword id="KW-0408">Iron</keyword>
<keyword id="KW-0411">Iron-sulfur</keyword>
<keyword id="KW-0479">Metal-binding</keyword>
<keyword id="KW-0560">Oxidoreductase</keyword>
<keyword id="KW-1185">Reference proteome</keyword>
<keyword id="KW-0813">Transport</keyword>
<reference key="1">
    <citation type="journal article" date="1996" name="FEBS Lett.">
        <title>CMP-N-acetylneuraminic acid hydroxylase: the first cytosolic Rieske iron-sulphur protein to be described in Eukarya.</title>
        <authorList>
            <person name="Schlenzka W."/>
            <person name="Shaw L."/>
            <person name="Kelm S."/>
            <person name="Schmidt C.L."/>
            <person name="Bill E."/>
            <person name="Trautwein A.X."/>
            <person name="Lottspeich F."/>
            <person name="Schauer R."/>
        </authorList>
    </citation>
    <scope>NUCLEOTIDE SEQUENCE [MRNA]</scope>
    <scope>FUNCTION</scope>
    <scope>ENZYME ACTIVITY</scope>
</reference>
<name>CMAH_PIG</name>
<dbReference type="EC" id="1.14.18.2"/>
<dbReference type="EMBL" id="Y15010">
    <property type="protein sequence ID" value="CAA75243.1"/>
    <property type="molecule type" value="mRNA"/>
</dbReference>
<dbReference type="PIR" id="S68831">
    <property type="entry name" value="S68831"/>
</dbReference>
<dbReference type="STRING" id="9823.ENSSSCP00000060314"/>
<dbReference type="PaxDb" id="9823-ENSSSCP00000001169"/>
<dbReference type="eggNOG" id="ENOG502QR0M">
    <property type="taxonomic scope" value="Eukaryota"/>
</dbReference>
<dbReference type="InParanoid" id="O19074"/>
<dbReference type="BRENDA" id="1.14.18.2">
    <property type="organism ID" value="6170"/>
</dbReference>
<dbReference type="UniPathway" id="UPA00628"/>
<dbReference type="Proteomes" id="UP000008227">
    <property type="component" value="Unplaced"/>
</dbReference>
<dbReference type="Proteomes" id="UP000314985">
    <property type="component" value="Unplaced"/>
</dbReference>
<dbReference type="Proteomes" id="UP000694570">
    <property type="component" value="Unplaced"/>
</dbReference>
<dbReference type="Proteomes" id="UP000694571">
    <property type="component" value="Unplaced"/>
</dbReference>
<dbReference type="Proteomes" id="UP000694720">
    <property type="component" value="Unplaced"/>
</dbReference>
<dbReference type="Proteomes" id="UP000694722">
    <property type="component" value="Unplaced"/>
</dbReference>
<dbReference type="Proteomes" id="UP000694723">
    <property type="component" value="Unplaced"/>
</dbReference>
<dbReference type="Proteomes" id="UP000694724">
    <property type="component" value="Unplaced"/>
</dbReference>
<dbReference type="Proteomes" id="UP000694725">
    <property type="component" value="Unplaced"/>
</dbReference>
<dbReference type="Proteomes" id="UP000694726">
    <property type="component" value="Unplaced"/>
</dbReference>
<dbReference type="Proteomes" id="UP000694727">
    <property type="component" value="Unplaced"/>
</dbReference>
<dbReference type="Proteomes" id="UP000694728">
    <property type="component" value="Unplaced"/>
</dbReference>
<dbReference type="GO" id="GO:0005737">
    <property type="term" value="C:cytoplasm"/>
    <property type="evidence" value="ECO:0000318"/>
    <property type="project" value="GO_Central"/>
</dbReference>
<dbReference type="GO" id="GO:0051537">
    <property type="term" value="F:2 iron, 2 sulfur cluster binding"/>
    <property type="evidence" value="ECO:0007669"/>
    <property type="project" value="UniProtKB-KW"/>
</dbReference>
<dbReference type="GO" id="GO:0030338">
    <property type="term" value="F:CMP-N-acetylneuraminate monooxygenase activity"/>
    <property type="evidence" value="ECO:0000318"/>
    <property type="project" value="GO_Central"/>
</dbReference>
<dbReference type="GO" id="GO:0046872">
    <property type="term" value="F:metal ion binding"/>
    <property type="evidence" value="ECO:0007669"/>
    <property type="project" value="UniProtKB-KW"/>
</dbReference>
<dbReference type="GO" id="GO:0046381">
    <property type="term" value="P:CMP-N-acetylneuraminate metabolic process"/>
    <property type="evidence" value="ECO:0000318"/>
    <property type="project" value="GO_Central"/>
</dbReference>
<dbReference type="GO" id="GO:0006054">
    <property type="term" value="P:N-acetylneuraminate metabolic process"/>
    <property type="evidence" value="ECO:0007669"/>
    <property type="project" value="UniProtKB-UniPathway"/>
</dbReference>
<dbReference type="FunFam" id="3.60.15.10:FF:000025">
    <property type="entry name" value="Inactive cytidine monophosphate-N-acetylneuraminic acid hydroxylase"/>
    <property type="match status" value="1"/>
</dbReference>
<dbReference type="Gene3D" id="3.60.15.10">
    <property type="entry name" value="Ribonuclease Z/Hydroxyacylglutathione hydrolase-like"/>
    <property type="match status" value="1"/>
</dbReference>
<dbReference type="InterPro" id="IPR027033">
    <property type="entry name" value="Cnh"/>
</dbReference>
<dbReference type="InterPro" id="IPR036866">
    <property type="entry name" value="RibonucZ/Hydroxyglut_hydro"/>
</dbReference>
<dbReference type="PANTHER" id="PTHR46522">
    <property type="entry name" value="CYTIDINE MONOPHOSPHATE-N-ACETYLNEURAMINIC ACID HYDROXYLASE"/>
    <property type="match status" value="1"/>
</dbReference>
<dbReference type="PANTHER" id="PTHR46522:SF1">
    <property type="entry name" value="INACTIVE CYTIDINE MONOPHOSPHATE-N-ACETYLNEURAMINIC ACID HYDROXYLASE"/>
    <property type="match status" value="1"/>
</dbReference>
<dbReference type="Pfam" id="PF13483">
    <property type="entry name" value="Lactamase_B_3"/>
    <property type="match status" value="1"/>
</dbReference>
<dbReference type="SUPFAM" id="SSF56281">
    <property type="entry name" value="Metallo-hydrolase/oxidoreductase"/>
    <property type="match status" value="1"/>
</dbReference>
<organism>
    <name type="scientific">Sus scrofa</name>
    <name type="common">Pig</name>
    <dbReference type="NCBI Taxonomy" id="9823"/>
    <lineage>
        <taxon>Eukaryota</taxon>
        <taxon>Metazoa</taxon>
        <taxon>Chordata</taxon>
        <taxon>Craniata</taxon>
        <taxon>Vertebrata</taxon>
        <taxon>Euteleostomi</taxon>
        <taxon>Mammalia</taxon>
        <taxon>Eutheria</taxon>
        <taxon>Laurasiatheria</taxon>
        <taxon>Artiodactyla</taxon>
        <taxon>Suina</taxon>
        <taxon>Suidae</taxon>
        <taxon>Sus</taxon>
    </lineage>
</organism>
<comment type="function">
    <text evidence="2">Sialic acids are components of carbohydrate chains of glycoconjugates and are involved in cell-cell recognition and cell-pathogen interactions. Catalyzes the conversion of CMP-N-acetylneuraminic acid (CMP-Neu5Ac) into its hydroxylated derivative CMP-N-glycolylneuraminic acid (CMP-Neu5Gc), a sialic acid abundantly expressed at the surface of many cells.</text>
</comment>
<comment type="catalytic activity">
    <reaction evidence="2">
        <text>CMP-N-acetyl-beta-neuraminate + 2 Fe(II)-[cytochrome b5] + O2 + 2 H(+) = CMP-N-glycoloyl-beta-neuraminate + 2 Fe(III)-[cytochrome b5] + H2O</text>
        <dbReference type="Rhea" id="RHEA:16145"/>
        <dbReference type="Rhea" id="RHEA-COMP:10438"/>
        <dbReference type="Rhea" id="RHEA-COMP:10439"/>
        <dbReference type="ChEBI" id="CHEBI:15377"/>
        <dbReference type="ChEBI" id="CHEBI:15378"/>
        <dbReference type="ChEBI" id="CHEBI:15379"/>
        <dbReference type="ChEBI" id="CHEBI:29033"/>
        <dbReference type="ChEBI" id="CHEBI:29034"/>
        <dbReference type="ChEBI" id="CHEBI:57812"/>
        <dbReference type="ChEBI" id="CHEBI:58376"/>
        <dbReference type="EC" id="1.14.18.2"/>
    </reaction>
</comment>
<comment type="cofactor">
    <cofactor evidence="1">
        <name>[2Fe-2S] cluster</name>
        <dbReference type="ChEBI" id="CHEBI:190135"/>
    </cofactor>
    <text evidence="1">Binds 1 [2Fe-2S] cluster per subunit.</text>
</comment>
<comment type="pathway">
    <text>Amino-sugar metabolism; N-acetylneuraminate metabolism.</text>
</comment>
<comment type="subcellular location">
    <subcellularLocation>
        <location evidence="1">Cytoplasm</location>
    </subcellularLocation>
</comment>
<comment type="similarity">
    <text evidence="3">Belongs to the CMP-Neu5Ac hydroxylase family.</text>
</comment>
<feature type="chain" id="PRO_0000127805" description="Cytidine monophosphate-N-acetylneuraminic acid hydroxylase">
    <location>
        <begin position="1" status="less than"/>
        <end position="435"/>
    </location>
</feature>
<feature type="non-terminal residue">
    <location>
        <position position="1"/>
    </location>
</feature>
<evidence type="ECO:0000250" key="1"/>
<evidence type="ECO:0000269" key="2">
    <source>
    </source>
</evidence>
<evidence type="ECO:0000305" key="3"/>
<proteinExistence type="evidence at transcript level"/>
<sequence length="435" mass="50628">THACMDLKLGDKRMVFDPWLIGPAFARGWWLLHEPPSDWLERLSRADLIYISHMHSDHLSYPTLKKLAERRPDVPIYVGNTERPVFWNLNQSGVQLTNINVVPFGIWQQVDKNLRFMILMDGVHPEMDTCIIVEYKGHKILNTVDCTRPNGGRLPMKVALMMSDFAGGASGFPMTFSGGKFTEEWKAQFIKTERKKLLNYKARLVKDLQPRIYCPFPGYFVESHPADKYIKETNIKNDPNELNNLIKKNSEVVTWTPRPGATLDLGRMLKDPTDSKGIVEPPEGTKIYKDSWDFGPYLNILNAAIGDEIFRHSSWIKEYFTWAGFKDYNLVVRMIETDEDFSPLPGGYDYLVDFLDLSFPKERPSREHPYEEIRSRVDVIRHVVKNGLLWDDLYIGFQTRLQRDPDIYHHLFWNHFQIKLPLTPPDWKSFLMCSG</sequence>